<sequence>MAKLGYKVEADPSKTAKAMGRTLRISKKHALEICREINGMKLETAVSFLNRVLALETPVPFKVHNKDVPHRKGKIGTHAGRFPQKATEEILKVLDNAKKNAEYKGLNTEKLRIKHISSNKGFIIKRFMPRAFGRASPKYQETIHIQVILEEFY</sequence>
<keyword id="KW-0687">Ribonucleoprotein</keyword>
<keyword id="KW-0689">Ribosomal protein</keyword>
<keyword id="KW-0694">RNA-binding</keyword>
<keyword id="KW-0699">rRNA-binding</keyword>
<name>RL22_METVS</name>
<accession>A6UQ48</accession>
<gene>
    <name evidence="1" type="primary">rpl22</name>
    <name type="ordered locus">Mevan_0714</name>
</gene>
<comment type="function">
    <text evidence="1">This protein binds specifically to 23S rRNA. It makes multiple contacts with different domains of the 23S rRNA in the assembled 50S subunit and ribosome.</text>
</comment>
<comment type="function">
    <text evidence="1">The globular domain of the protein is located near the polypeptide exit tunnel on the outside of the subunit, while an extended beta-hairpin is found that lines the wall of the exit tunnel in the center of the 70S ribosome.</text>
</comment>
<comment type="subunit">
    <text evidence="1">Part of the 50S ribosomal subunit.</text>
</comment>
<comment type="similarity">
    <text evidence="1">Belongs to the universal ribosomal protein uL22 family.</text>
</comment>
<protein>
    <recommendedName>
        <fullName evidence="1">Large ribosomal subunit protein uL22</fullName>
    </recommendedName>
    <alternativeName>
        <fullName evidence="2">50S ribosomal protein L22</fullName>
    </alternativeName>
</protein>
<feature type="chain" id="PRO_0000354544" description="Large ribosomal subunit protein uL22">
    <location>
        <begin position="1"/>
        <end position="153"/>
    </location>
</feature>
<evidence type="ECO:0000255" key="1">
    <source>
        <dbReference type="HAMAP-Rule" id="MF_01331"/>
    </source>
</evidence>
<evidence type="ECO:0000305" key="2"/>
<dbReference type="EMBL" id="CP000742">
    <property type="protein sequence ID" value="ABR54620.1"/>
    <property type="molecule type" value="Genomic_DNA"/>
</dbReference>
<dbReference type="RefSeq" id="WP_011972522.1">
    <property type="nucleotide sequence ID" value="NC_009634.1"/>
</dbReference>
<dbReference type="SMR" id="A6UQ48"/>
<dbReference type="STRING" id="406327.Mevan_0714"/>
<dbReference type="GeneID" id="5326205"/>
<dbReference type="KEGG" id="mvn:Mevan_0714"/>
<dbReference type="eggNOG" id="arCOG04098">
    <property type="taxonomic scope" value="Archaea"/>
</dbReference>
<dbReference type="HOGENOM" id="CLU_083987_0_2_2"/>
<dbReference type="OrthoDB" id="314984at2157"/>
<dbReference type="Proteomes" id="UP000001107">
    <property type="component" value="Chromosome"/>
</dbReference>
<dbReference type="GO" id="GO:0022625">
    <property type="term" value="C:cytosolic large ribosomal subunit"/>
    <property type="evidence" value="ECO:0007669"/>
    <property type="project" value="TreeGrafter"/>
</dbReference>
<dbReference type="GO" id="GO:0019843">
    <property type="term" value="F:rRNA binding"/>
    <property type="evidence" value="ECO:0007669"/>
    <property type="project" value="UniProtKB-UniRule"/>
</dbReference>
<dbReference type="GO" id="GO:0003735">
    <property type="term" value="F:structural constituent of ribosome"/>
    <property type="evidence" value="ECO:0007669"/>
    <property type="project" value="InterPro"/>
</dbReference>
<dbReference type="GO" id="GO:0002181">
    <property type="term" value="P:cytoplasmic translation"/>
    <property type="evidence" value="ECO:0007669"/>
    <property type="project" value="TreeGrafter"/>
</dbReference>
<dbReference type="CDD" id="cd00336">
    <property type="entry name" value="Ribosomal_L22"/>
    <property type="match status" value="1"/>
</dbReference>
<dbReference type="Gene3D" id="3.90.470.10">
    <property type="entry name" value="Ribosomal protein L22/L17"/>
    <property type="match status" value="1"/>
</dbReference>
<dbReference type="HAMAP" id="MF_01331_A">
    <property type="entry name" value="Ribosomal_uL22_A"/>
    <property type="match status" value="1"/>
</dbReference>
<dbReference type="InterPro" id="IPR001063">
    <property type="entry name" value="Ribosomal_uL22"/>
</dbReference>
<dbReference type="InterPro" id="IPR018260">
    <property type="entry name" value="Ribosomal_uL22_CS"/>
</dbReference>
<dbReference type="InterPro" id="IPR005721">
    <property type="entry name" value="Ribosomal_uL22_euk/arc"/>
</dbReference>
<dbReference type="InterPro" id="IPR036394">
    <property type="entry name" value="Ribosomal_uL22_sf"/>
</dbReference>
<dbReference type="NCBIfam" id="NF003260">
    <property type="entry name" value="PRK04223.1"/>
    <property type="match status" value="1"/>
</dbReference>
<dbReference type="NCBIfam" id="TIGR01038">
    <property type="entry name" value="uL22_arch_euk"/>
    <property type="match status" value="1"/>
</dbReference>
<dbReference type="PANTHER" id="PTHR11593">
    <property type="entry name" value="60S RIBOSOMAL PROTEIN L17"/>
    <property type="match status" value="1"/>
</dbReference>
<dbReference type="PANTHER" id="PTHR11593:SF10">
    <property type="entry name" value="60S RIBOSOMAL PROTEIN L17"/>
    <property type="match status" value="1"/>
</dbReference>
<dbReference type="Pfam" id="PF00237">
    <property type="entry name" value="Ribosomal_L22"/>
    <property type="match status" value="1"/>
</dbReference>
<dbReference type="SUPFAM" id="SSF54843">
    <property type="entry name" value="Ribosomal protein L22"/>
    <property type="match status" value="1"/>
</dbReference>
<dbReference type="PROSITE" id="PS00464">
    <property type="entry name" value="RIBOSOMAL_L22"/>
    <property type="match status" value="1"/>
</dbReference>
<reference key="1">
    <citation type="submission" date="2007-06" db="EMBL/GenBank/DDBJ databases">
        <title>Complete sequence of Methanococcus vannielii SB.</title>
        <authorList>
            <consortium name="US DOE Joint Genome Institute"/>
            <person name="Copeland A."/>
            <person name="Lucas S."/>
            <person name="Lapidus A."/>
            <person name="Barry K."/>
            <person name="Glavina del Rio T."/>
            <person name="Dalin E."/>
            <person name="Tice H."/>
            <person name="Pitluck S."/>
            <person name="Chain P."/>
            <person name="Malfatti S."/>
            <person name="Shin M."/>
            <person name="Vergez L."/>
            <person name="Schmutz J."/>
            <person name="Larimer F."/>
            <person name="Land M."/>
            <person name="Hauser L."/>
            <person name="Kyrpides N."/>
            <person name="Anderson I."/>
            <person name="Sieprawska-Lupa M."/>
            <person name="Whitman W.B."/>
            <person name="Richardson P."/>
        </authorList>
    </citation>
    <scope>NUCLEOTIDE SEQUENCE [LARGE SCALE GENOMIC DNA]</scope>
    <source>
        <strain>ATCC 35089 / DSM 1224 / JCM 13029 / OCM 148 / SB</strain>
    </source>
</reference>
<proteinExistence type="inferred from homology"/>
<organism>
    <name type="scientific">Methanococcus vannielii (strain ATCC 35089 / DSM 1224 / JCM 13029 / OCM 148 / SB)</name>
    <dbReference type="NCBI Taxonomy" id="406327"/>
    <lineage>
        <taxon>Archaea</taxon>
        <taxon>Methanobacteriati</taxon>
        <taxon>Methanobacteriota</taxon>
        <taxon>Methanomada group</taxon>
        <taxon>Methanococci</taxon>
        <taxon>Methanococcales</taxon>
        <taxon>Methanococcaceae</taxon>
        <taxon>Methanococcus</taxon>
    </lineage>
</organism>